<sequence length="152" mass="16516">MAVLSKEYGFVLLTGAASFIMVAHLAINVSKARKKYKVEYPIMYSTDPENGHIFNCIQRAHQNTLEVYPPFLFFLAVGGVYHPRIASGLGLAWIVGRVLYAYGYYTGEPSKRSRGALGSIALLGLVGTTVCSAFQHLGWVKSGLGSGPKCCH</sequence>
<organism>
    <name type="scientific">Homo sapiens</name>
    <name type="common">Human</name>
    <dbReference type="NCBI Taxonomy" id="9606"/>
    <lineage>
        <taxon>Eukaryota</taxon>
        <taxon>Metazoa</taxon>
        <taxon>Chordata</taxon>
        <taxon>Craniata</taxon>
        <taxon>Vertebrata</taxon>
        <taxon>Euteleostomi</taxon>
        <taxon>Mammalia</taxon>
        <taxon>Eutheria</taxon>
        <taxon>Euarchontoglires</taxon>
        <taxon>Primates</taxon>
        <taxon>Haplorrhini</taxon>
        <taxon>Catarrhini</taxon>
        <taxon>Hominidae</taxon>
        <taxon>Homo</taxon>
    </lineage>
</organism>
<evidence type="ECO:0000255" key="1"/>
<evidence type="ECO:0000269" key="2">
    <source>
    </source>
</evidence>
<evidence type="ECO:0000269" key="3">
    <source>
    </source>
</evidence>
<evidence type="ECO:0000269" key="4">
    <source>
    </source>
</evidence>
<evidence type="ECO:0000269" key="5">
    <source>
    </source>
</evidence>
<evidence type="ECO:0000269" key="6">
    <source>
    </source>
</evidence>
<evidence type="ECO:0000305" key="7"/>
<evidence type="ECO:0000305" key="8">
    <source>
    </source>
</evidence>
<evidence type="ECO:0000305" key="9">
    <source>
    </source>
</evidence>
<evidence type="ECO:0000305" key="10">
    <source>
    </source>
</evidence>
<evidence type="ECO:0000312" key="11">
    <source>
        <dbReference type="HGNC" id="HGNC:7064"/>
    </source>
</evidence>
<proteinExistence type="evidence at protein level"/>
<name>MGST3_HUMAN</name>
<protein>
    <recommendedName>
        <fullName evidence="10">Glutathione S-transferase 3, mitochondrial</fullName>
        <shortName>GST-3</shortName>
        <ecNumber evidence="5">2.5.1.-</ecNumber>
    </recommendedName>
    <alternativeName>
        <fullName evidence="10">Glutathione peroxidase MGST3</fullName>
        <ecNumber evidence="6">1.11.1.-</ecNumber>
    </alternativeName>
    <alternativeName>
        <fullName evidence="10">LTC4 synthase MGST3</fullName>
        <ecNumber evidence="6">4.4.1.20</ecNumber>
    </alternativeName>
</protein>
<comment type="function">
    <text evidence="5 6">Displays both glutathione S-transferase and glutathione peroxidase activities toward oxyeicosanoids, as part of cellular detoxification as well as synthesis of bioactive metabolites (PubMed:36370807, PubMed:9278457). Catalyzes conjugate addition of reduced glutathione to the alpha, beta-unsaturated C=C carbonyl group of eisosanoids such as leukotriene A4 and 15-deoxy-Delta12,14-prostaglandin J2 to form GSH adducts relevant to the inflammatory response (PubMed:36370807, PubMed:9278457). Catalyzes glutathione-dependent reduction of eicosanoid peroxides to yield the corresponding eicosanoid hydroxides (PubMed:9278457).</text>
</comment>
<comment type="catalytic activity">
    <reaction evidence="6">
        <text>leukotriene C4 = leukotriene A4 + glutathione</text>
        <dbReference type="Rhea" id="RHEA:17617"/>
        <dbReference type="ChEBI" id="CHEBI:57463"/>
        <dbReference type="ChEBI" id="CHEBI:57925"/>
        <dbReference type="ChEBI" id="CHEBI:57973"/>
        <dbReference type="EC" id="4.4.1.20"/>
    </reaction>
    <physiologicalReaction direction="right-to-left" evidence="10">
        <dbReference type="Rhea" id="RHEA:17619"/>
    </physiologicalReaction>
</comment>
<comment type="catalytic activity">
    <reaction evidence="5">
        <text>15-deoxy-Delta(12,14)-prostaglandin J2 + glutathione = 15-deoxy-Delta(12,14)-prostaglandin J2-S-(R)-glutathione</text>
        <dbReference type="Rhea" id="RHEA:75963"/>
        <dbReference type="ChEBI" id="CHEBI:57925"/>
        <dbReference type="ChEBI" id="CHEBI:85236"/>
        <dbReference type="ChEBI" id="CHEBI:194498"/>
    </reaction>
    <physiologicalReaction direction="left-to-right" evidence="9">
        <dbReference type="Rhea" id="RHEA:75964"/>
    </physiologicalReaction>
</comment>
<comment type="catalytic activity">
    <reaction evidence="6">
        <text>(5S)-hydroperoxy-(6E,8Z,11Z,14Z)-eicosatetraenoate + 2 glutathione = (5S)-hydroxy-(6E,8Z,11Z,14Z)-eicosatetraenoate + glutathione disulfide + H2O</text>
        <dbReference type="Rhea" id="RHEA:48620"/>
        <dbReference type="ChEBI" id="CHEBI:15377"/>
        <dbReference type="ChEBI" id="CHEBI:57450"/>
        <dbReference type="ChEBI" id="CHEBI:57925"/>
        <dbReference type="ChEBI" id="CHEBI:58297"/>
        <dbReference type="ChEBI" id="CHEBI:90632"/>
    </reaction>
    <physiologicalReaction direction="left-to-right" evidence="10">
        <dbReference type="Rhea" id="RHEA:48621"/>
    </physiologicalReaction>
</comment>
<comment type="biophysicochemical properties">
    <kinetics>
        <KM evidence="6">21 uM for (5S)-hydroperoxy-(6E,8Z,11Z,14Z)-eicosatetraenoate</KM>
        <KM evidence="5">9.2 uM for 15-deoxy-Delta12,14-prostaglandin J2</KM>
    </kinetics>
</comment>
<comment type="pathway">
    <text evidence="10">Lipid metabolism; leukotriene C4 biosynthesis.</text>
</comment>
<comment type="pathway">
    <text evidence="10">Lipid metabolism; arachidonate metabolism.</text>
</comment>
<comment type="interaction">
    <interactant intactId="EBI-724754">
        <id>O14880</id>
    </interactant>
    <interactant intactId="EBI-1754287">
        <id>Q9NRZ5</id>
        <label>AGPAT4</label>
    </interactant>
    <organismsDiffer>false</organismsDiffer>
    <experiments>3</experiments>
</comment>
<comment type="interaction">
    <interactant intactId="EBI-724754">
        <id>O14880</id>
    </interactant>
    <interactant intactId="EBI-11522760">
        <id>Q6RW13-2</id>
        <label>AGTRAP</label>
    </interactant>
    <organismsDiffer>false</organismsDiffer>
    <experiments>3</experiments>
</comment>
<comment type="interaction">
    <interactant intactId="EBI-724754">
        <id>O14880</id>
    </interactant>
    <interactant intactId="EBI-715495">
        <id>P05090</id>
        <label>APOD</label>
    </interactant>
    <organismsDiffer>false</organismsDiffer>
    <experiments>3</experiments>
</comment>
<comment type="interaction">
    <interactant intactId="EBI-724754">
        <id>O14880</id>
    </interactant>
    <interactant intactId="EBI-4290634">
        <id>Q9BQE5</id>
        <label>APOL2</label>
    </interactant>
    <organismsDiffer>false</organismsDiffer>
    <experiments>3</experiments>
</comment>
<comment type="interaction">
    <interactant intactId="EBI-724754">
        <id>O14880</id>
    </interactant>
    <interactant intactId="EBI-745213">
        <id>P29972</id>
        <label>AQP1</label>
    </interactant>
    <organismsDiffer>false</organismsDiffer>
    <experiments>3</experiments>
</comment>
<comment type="interaction">
    <interactant intactId="EBI-724754">
        <id>O14880</id>
    </interactant>
    <interactant intactId="EBI-12820279">
        <id>Q96PS8</id>
        <label>AQP10</label>
    </interactant>
    <organismsDiffer>false</organismsDiffer>
    <experiments>3</experiments>
</comment>
<comment type="interaction">
    <interactant intactId="EBI-724754">
        <id>O14880</id>
    </interactant>
    <interactant intactId="EBI-2808854">
        <id>Q92482</id>
        <label>AQP3</label>
    </interactant>
    <organismsDiffer>false</organismsDiffer>
    <experiments>3</experiments>
</comment>
<comment type="interaction">
    <interactant intactId="EBI-724754">
        <id>O14880</id>
    </interactant>
    <interactant intactId="EBI-714543">
        <id>Q15041</id>
        <label>ARL6IP1</label>
    </interactant>
    <organismsDiffer>false</organismsDiffer>
    <experiments>3</experiments>
</comment>
<comment type="interaction">
    <interactant intactId="EBI-724754">
        <id>O14880</id>
    </interactant>
    <interactant intactId="EBI-2808844">
        <id>Q8N6S5</id>
        <label>ARL6IP6</label>
    </interactant>
    <organismsDiffer>false</organismsDiffer>
    <experiments>3</experiments>
</comment>
<comment type="interaction">
    <interactant intactId="EBI-724754">
        <id>O14880</id>
    </interactant>
    <interactant intactId="EBI-749204">
        <id>O15155</id>
        <label>BET1</label>
    </interactant>
    <organismsDiffer>false</organismsDiffer>
    <experiments>3</experiments>
</comment>
<comment type="interaction">
    <interactant intactId="EBI-724754">
        <id>O14880</id>
    </interactant>
    <interactant intactId="EBI-3922513">
        <id>O95393</id>
        <label>BMP10</label>
    </interactant>
    <organismsDiffer>false</organismsDiffer>
    <experiments>3</experiments>
</comment>
<comment type="interaction">
    <interactant intactId="EBI-724754">
        <id>O14880</id>
    </interactant>
    <interactant intactId="EBI-2836238">
        <id>Q96F05</id>
        <label>C11orf24</label>
    </interactant>
    <organismsDiffer>false</organismsDiffer>
    <experiments>3</experiments>
</comment>
<comment type="interaction">
    <interactant intactId="EBI-724754">
        <id>O14880</id>
    </interactant>
    <interactant intactId="EBI-9686780">
        <id>Q06432</id>
        <label>CACNG1</label>
    </interactant>
    <organismsDiffer>false</organismsDiffer>
    <experiments>3</experiments>
</comment>
<comment type="interaction">
    <interactant intactId="EBI-724754">
        <id>O14880</id>
    </interactant>
    <interactant intactId="EBI-395261">
        <id>P24863</id>
        <label>CCNC</label>
    </interactant>
    <organismsDiffer>false</organismsDiffer>
    <experiments>3</experiments>
</comment>
<comment type="interaction">
    <interactant intactId="EBI-724754">
        <id>O14880</id>
    </interactant>
    <interactant intactId="EBI-358858">
        <id>O14735</id>
        <label>CDIPT</label>
    </interactant>
    <organismsDiffer>false</organismsDiffer>
    <experiments>3</experiments>
</comment>
<comment type="interaction">
    <interactant intactId="EBI-724754">
        <id>O14880</id>
    </interactant>
    <interactant intactId="EBI-17274839">
        <id>P58418</id>
        <label>CLRN1</label>
    </interactant>
    <organismsDiffer>false</organismsDiffer>
    <experiments>3</experiments>
</comment>
<comment type="interaction">
    <interactant intactId="EBI-724754">
        <id>O14880</id>
    </interactant>
    <interactant intactId="EBI-11522780">
        <id>Q96DZ9-2</id>
        <label>CMTM5</label>
    </interactant>
    <organismsDiffer>false</organismsDiffer>
    <experiments>3</experiments>
</comment>
<comment type="interaction">
    <interactant intactId="EBI-724754">
        <id>O14880</id>
    </interactant>
    <interactant intactId="EBI-6942903">
        <id>Q96BA8</id>
        <label>CREB3L1</label>
    </interactant>
    <organismsDiffer>false</organismsDiffer>
    <experiments>3</experiments>
</comment>
<comment type="interaction">
    <interactant intactId="EBI-724754">
        <id>O14880</id>
    </interactant>
    <interactant intactId="EBI-2680384">
        <id>Q9BQA9</id>
        <label>CYBC1</label>
    </interactant>
    <organismsDiffer>false</organismsDiffer>
    <experiments>3</experiments>
</comment>
<comment type="interaction">
    <interactant intactId="EBI-724754">
        <id>O14880</id>
    </interactant>
    <interactant intactId="EBI-711490">
        <id>Q9UKR5</id>
        <label>ERG28</label>
    </interactant>
    <organismsDiffer>false</organismsDiffer>
    <experiments>3</experiments>
</comment>
<comment type="interaction">
    <interactant intactId="EBI-724754">
        <id>O14880</id>
    </interactant>
    <interactant intactId="EBI-12142299">
        <id>Q96IV6</id>
        <label>FAXDC2</label>
    </interactant>
    <organismsDiffer>false</organismsDiffer>
    <experiments>3</experiments>
</comment>
<comment type="interaction">
    <interactant intactId="EBI-724754">
        <id>O14880</id>
    </interactant>
    <interactant intactId="EBI-714482">
        <id>Q9BWH2</id>
        <label>FUNDC2</label>
    </interactant>
    <organismsDiffer>false</organismsDiffer>
    <experiments>3</experiments>
</comment>
<comment type="interaction">
    <interactant intactId="EBI-724754">
        <id>O14880</id>
    </interactant>
    <interactant intactId="EBI-713304">
        <id>Q9H0Q3</id>
        <label>FXYD6</label>
    </interactant>
    <organismsDiffer>false</organismsDiffer>
    <experiments>3</experiments>
</comment>
<comment type="interaction">
    <interactant intactId="EBI-724754">
        <id>O14880</id>
    </interactant>
    <interactant intactId="EBI-11991950">
        <id>Q8WWP7</id>
        <label>GIMAP1</label>
    </interactant>
    <organismsDiffer>false</organismsDiffer>
    <experiments>3</experiments>
</comment>
<comment type="interaction">
    <interactant intactId="EBI-724754">
        <id>O14880</id>
    </interactant>
    <interactant intactId="EBI-6166686">
        <id>Q96F15</id>
        <label>GIMAP5</label>
    </interactant>
    <organismsDiffer>false</organismsDiffer>
    <experiments>3</experiments>
</comment>
<comment type="interaction">
    <interactant intactId="EBI-724754">
        <id>O14880</id>
    </interactant>
    <interactant intactId="EBI-13345167">
        <id>Q8TDT2</id>
        <label>GPR152</label>
    </interactant>
    <organismsDiffer>false</organismsDiffer>
    <experiments>3</experiments>
</comment>
<comment type="interaction">
    <interactant intactId="EBI-724754">
        <id>O14880</id>
    </interactant>
    <interactant intactId="EBI-11721746">
        <id>Q8TED1</id>
        <label>GPX8</label>
    </interactant>
    <organismsDiffer>false</organismsDiffer>
    <experiments>3</experiments>
</comment>
<comment type="interaction">
    <interactant intactId="EBI-724754">
        <id>O14880</id>
    </interactant>
    <interactant intactId="EBI-10232876">
        <id>Q14416</id>
        <label>GRM2</label>
    </interactant>
    <organismsDiffer>false</organismsDiffer>
    <experiments>3</experiments>
</comment>
<comment type="interaction">
    <interactant intactId="EBI-724754">
        <id>O14880</id>
    </interactant>
    <interactant intactId="EBI-712096">
        <id>P30519</id>
        <label>HMOX2</label>
    </interactant>
    <organismsDiffer>false</organismsDiffer>
    <experiments>3</experiments>
</comment>
<comment type="interaction">
    <interactant intactId="EBI-724754">
        <id>O14880</id>
    </interactant>
    <interactant intactId="EBI-2568251">
        <id>P11215</id>
        <label>ITGAM</label>
    </interactant>
    <organismsDiffer>false</organismsDiffer>
    <experiments>3</experiments>
</comment>
<comment type="interaction">
    <interactant intactId="EBI-724754">
        <id>O14880</id>
    </interactant>
    <interactant intactId="EBI-12268900">
        <id>Q68G75</id>
        <label>LEMD1</label>
    </interactant>
    <organismsDiffer>false</organismsDiffer>
    <experiments>3</experiments>
</comment>
<comment type="interaction">
    <interactant intactId="EBI-724754">
        <id>O14880</id>
    </interactant>
    <interactant intactId="EBI-12033434">
        <id>Q9UBY5</id>
        <label>LPAR3</label>
    </interactant>
    <organismsDiffer>false</organismsDiffer>
    <experiments>3</experiments>
</comment>
<comment type="interaction">
    <interactant intactId="EBI-724754">
        <id>O14880</id>
    </interactant>
    <interactant intactId="EBI-2830349">
        <id>Q7Z4F1</id>
        <label>LRP10</label>
    </interactant>
    <organismsDiffer>false</organismsDiffer>
    <experiments>3</experiments>
</comment>
<comment type="interaction">
    <interactant intactId="EBI-724754">
        <id>O14880</id>
    </interactant>
    <interactant intactId="EBI-724754">
        <id>O14880</id>
        <label>MGST3</label>
    </interactant>
    <organismsDiffer>false</organismsDiffer>
    <experiments>3</experiments>
</comment>
<comment type="interaction">
    <interactant intactId="EBI-724754">
        <id>O14880</id>
    </interactant>
    <interactant intactId="EBI-8449636">
        <id>P30301</id>
        <label>MIP</label>
    </interactant>
    <organismsDiffer>false</organismsDiffer>
    <experiments>3</experiments>
</comment>
<comment type="interaction">
    <interactant intactId="EBI-724754">
        <id>O14880</id>
    </interactant>
    <interactant intactId="EBI-5454865">
        <id>Q6IN84</id>
        <label>MRM1</label>
    </interactant>
    <organismsDiffer>false</organismsDiffer>
    <experiments>3</experiments>
</comment>
<comment type="interaction">
    <interactant intactId="EBI-724754">
        <id>O14880</id>
    </interactant>
    <interactant intactId="EBI-3923617">
        <id>Q9H2K0</id>
        <label>MTIF3</label>
    </interactant>
    <organismsDiffer>false</organismsDiffer>
    <experiments>3</experiments>
</comment>
<comment type="interaction">
    <interactant intactId="EBI-724754">
        <id>O14880</id>
    </interactant>
    <interactant intactId="EBI-721517">
        <id>Q99519</id>
        <label>NEU1</label>
    </interactant>
    <organismsDiffer>false</organismsDiffer>
    <experiments>3</experiments>
</comment>
<comment type="interaction">
    <interactant intactId="EBI-724754">
        <id>O14880</id>
    </interactant>
    <interactant intactId="EBI-10317425">
        <id>Q9NZG7</id>
        <label>NINJ2</label>
    </interactant>
    <organismsDiffer>false</organismsDiffer>
    <experiments>3</experiments>
</comment>
<comment type="interaction">
    <interactant intactId="EBI-724754">
        <id>O14880</id>
    </interactant>
    <interactant intactId="EBI-3919611">
        <id>Q16617</id>
        <label>NKG7</label>
    </interactant>
    <organismsDiffer>false</organismsDiffer>
    <experiments>3</experiments>
</comment>
<comment type="interaction">
    <interactant intactId="EBI-724754">
        <id>O14880</id>
    </interactant>
    <interactant intactId="EBI-12051377">
        <id>Q8N912</id>
        <label>NRAC</label>
    </interactant>
    <organismsDiffer>false</organismsDiffer>
    <experiments>3</experiments>
</comment>
<comment type="interaction">
    <interactant intactId="EBI-724754">
        <id>O14880</id>
    </interactant>
    <interactant intactId="EBI-10262547">
        <id>Q8IXM6</id>
        <label>NRM</label>
    </interactant>
    <organismsDiffer>false</organismsDiffer>
    <experiments>3</experiments>
</comment>
<comment type="interaction">
    <interactant intactId="EBI-724754">
        <id>O14880</id>
    </interactant>
    <interactant intactId="EBI-6380741">
        <id>P42857</id>
        <label>NSG1</label>
    </interactant>
    <organismsDiffer>false</organismsDiffer>
    <experiments>3</experiments>
</comment>
<comment type="interaction">
    <interactant intactId="EBI-724754">
        <id>O14880</id>
    </interactant>
    <interactant intactId="EBI-2559100">
        <id>O75459</id>
        <label>PAGE1</label>
    </interactant>
    <organismsDiffer>false</organismsDiffer>
    <experiments>3</experiments>
</comment>
<comment type="interaction">
    <interactant intactId="EBI-724754">
        <id>O14880</id>
    </interactant>
    <interactant intactId="EBI-692836">
        <id>P26678</id>
        <label>PLN</label>
    </interactant>
    <organismsDiffer>false</organismsDiffer>
    <experiments>3</experiments>
</comment>
<comment type="interaction">
    <interactant intactId="EBI-724754">
        <id>O14880</id>
    </interactant>
    <interactant intactId="EBI-12188331">
        <id>P60201-2</id>
        <label>PLP1</label>
    </interactant>
    <organismsDiffer>false</organismsDiffer>
    <experiments>3</experiments>
</comment>
<comment type="interaction">
    <interactant intactId="EBI-724754">
        <id>O14880</id>
    </interactant>
    <interactant intactId="EBI-608347">
        <id>Q04941</id>
        <label>PLP2</label>
    </interactant>
    <organismsDiffer>false</organismsDiffer>
    <experiments>3</experiments>
</comment>
<comment type="interaction">
    <interactant intactId="EBI-724754">
        <id>O14880</id>
    </interactant>
    <interactant intactId="EBI-10485931">
        <id>Q5VZY2</id>
        <label>PLPP4</label>
    </interactant>
    <organismsDiffer>false</organismsDiffer>
    <experiments>3</experiments>
</comment>
<comment type="interaction">
    <interactant intactId="EBI-724754">
        <id>O14880</id>
    </interactant>
    <interactant intactId="EBI-14210385">
        <id>Q59EV6</id>
        <label>PPGB</label>
    </interactant>
    <organismsDiffer>false</organismsDiffer>
    <experiments>3</experiments>
</comment>
<comment type="interaction">
    <interactant intactId="EBI-724754">
        <id>O14880</id>
    </interactant>
    <interactant intactId="EBI-2684237">
        <id>O00767</id>
        <label>SCD</label>
    </interactant>
    <organismsDiffer>false</organismsDiffer>
    <experiments>3</experiments>
</comment>
<comment type="interaction">
    <interactant intactId="EBI-724754">
        <id>O14880</id>
    </interactant>
    <interactant intactId="EBI-17247926">
        <id>Q9NY72</id>
        <label>SCN3B</label>
    </interactant>
    <organismsDiffer>false</organismsDiffer>
    <experiments>3</experiments>
</comment>
<comment type="interaction">
    <interactant intactId="EBI-724754">
        <id>O14880</id>
    </interactant>
    <interactant intactId="EBI-1058865">
        <id>O75396</id>
        <label>SEC22B</label>
    </interactant>
    <organismsDiffer>false</organismsDiffer>
    <experiments>3</experiments>
</comment>
<comment type="interaction">
    <interactant intactId="EBI-724754">
        <id>O14880</id>
    </interactant>
    <interactant intactId="EBI-359038">
        <id>P43003</id>
        <label>SLC1A3</label>
    </interactant>
    <organismsDiffer>false</organismsDiffer>
    <experiments>3</experiments>
</comment>
<comment type="interaction">
    <interactant intactId="EBI-724754">
        <id>O14880</id>
    </interactant>
    <interactant intactId="EBI-2825135">
        <id>P22732</id>
        <label>SLC2A5</label>
    </interactant>
    <organismsDiffer>false</organismsDiffer>
    <experiments>3</experiments>
</comment>
<comment type="interaction">
    <interactant intactId="EBI-724754">
        <id>O14880</id>
    </interactant>
    <interactant intactId="EBI-12870360">
        <id>P78382</id>
        <label>SLC35A1</label>
    </interactant>
    <organismsDiffer>false</organismsDiffer>
    <experiments>3</experiments>
</comment>
<comment type="interaction">
    <interactant intactId="EBI-724754">
        <id>O14880</id>
    </interactant>
    <interactant intactId="EBI-2823239">
        <id>Q9NUM3</id>
        <label>SLC39A9</label>
    </interactant>
    <organismsDiffer>false</organismsDiffer>
    <experiments>3</experiments>
</comment>
<comment type="interaction">
    <interactant intactId="EBI-724754">
        <id>O14880</id>
    </interactant>
    <interactant intactId="EBI-4289564">
        <id>P30825</id>
        <label>SLC7A1</label>
    </interactant>
    <organismsDiffer>false</organismsDiffer>
    <experiments>3</experiments>
</comment>
<comment type="interaction">
    <interactant intactId="EBI-724754">
        <id>O14880</id>
    </interactant>
    <interactant intactId="EBI-8640191">
        <id>Q9NRQ5</id>
        <label>SMCO4</label>
    </interactant>
    <organismsDiffer>false</organismsDiffer>
    <experiments>3</experiments>
</comment>
<comment type="interaction">
    <interactant intactId="EBI-724754">
        <id>O14880</id>
    </interactant>
    <interactant intactId="EBI-10244848">
        <id>Q5SQN1</id>
        <label>SNAP47</label>
    </interactant>
    <organismsDiffer>false</organismsDiffer>
    <experiments>3</experiments>
</comment>
<comment type="interaction">
    <interactant intactId="EBI-724754">
        <id>O14880</id>
    </interactant>
    <interactant intactId="EBI-11957067">
        <id>Q6UX34</id>
        <label>SNORC</label>
    </interactant>
    <organismsDiffer>false</organismsDiffer>
    <experiments>3</experiments>
</comment>
<comment type="interaction">
    <interactant intactId="EBI-724754">
        <id>O14880</id>
    </interactant>
    <interactant intactId="EBI-1394295">
        <id>Q13277</id>
        <label>STX3</label>
    </interactant>
    <organismsDiffer>false</organismsDiffer>
    <experiments>3</experiments>
</comment>
<comment type="interaction">
    <interactant intactId="EBI-724754">
        <id>O14880</id>
    </interactant>
    <interactant intactId="EBI-3221827">
        <id>O15400</id>
        <label>STX7</label>
    </interactant>
    <organismsDiffer>false</organismsDiffer>
    <experiments>3</experiments>
</comment>
<comment type="interaction">
    <interactant intactId="EBI-724754">
        <id>O14880</id>
    </interactant>
    <interactant intactId="EBI-727240">
        <id>Q9UNK0</id>
        <label>STX8</label>
    </interactant>
    <organismsDiffer>false</organismsDiffer>
    <experiments>3</experiments>
</comment>
<comment type="interaction">
    <interactant intactId="EBI-724754">
        <id>O14880</id>
    </interactant>
    <interactant intactId="EBI-13075176">
        <id>Q8N2H4</id>
        <label>SYS1</label>
    </interactant>
    <organismsDiffer>false</organismsDiffer>
    <experiments>3</experiments>
</comment>
<comment type="interaction">
    <interactant intactId="EBI-724754">
        <id>O14880</id>
    </interactant>
    <interactant intactId="EBI-1049924">
        <id>Q00059</id>
        <label>TFAM</label>
    </interactant>
    <organismsDiffer>false</organismsDiffer>
    <experiments>4</experiments>
</comment>
<comment type="interaction">
    <interactant intactId="EBI-724754">
        <id>O14880</id>
    </interactant>
    <interactant intactId="EBI-355727">
        <id>P02786</id>
        <label>TFRC</label>
    </interactant>
    <organismsDiffer>false</organismsDiffer>
    <experiments>3</experiments>
</comment>
<comment type="interaction">
    <interactant intactId="EBI-724754">
        <id>O14880</id>
    </interactant>
    <interactant intactId="EBI-12845616">
        <id>Q6UX40</id>
        <label>TMEM107</label>
    </interactant>
    <organismsDiffer>false</organismsDiffer>
    <experiments>3</experiments>
</comment>
<comment type="interaction">
    <interactant intactId="EBI-724754">
        <id>O14880</id>
    </interactant>
    <interactant intactId="EBI-1057733">
        <id>Q9BVC6</id>
        <label>TMEM109</label>
    </interactant>
    <organismsDiffer>false</organismsDiffer>
    <experiments>3</experiments>
</comment>
<comment type="interaction">
    <interactant intactId="EBI-724754">
        <id>O14880</id>
    </interactant>
    <interactant intactId="EBI-10171534">
        <id>A0PK00</id>
        <label>TMEM120B</label>
    </interactant>
    <organismsDiffer>false</organismsDiffer>
    <experiments>3</experiments>
</comment>
<comment type="interaction">
    <interactant intactId="EBI-724754">
        <id>O14880</id>
    </interactant>
    <interactant intactId="EBI-2844246">
        <id>Q9NV12</id>
        <label>TMEM140</label>
    </interactant>
    <organismsDiffer>false</organismsDiffer>
    <experiments>3</experiments>
</comment>
<comment type="interaction">
    <interactant intactId="EBI-724754">
        <id>O14880</id>
    </interactant>
    <interactant intactId="EBI-12195227">
        <id>Q8NBD8</id>
        <label>TMEM229B</label>
    </interactant>
    <organismsDiffer>false</organismsDiffer>
    <experiments>3</experiments>
</comment>
<comment type="interaction">
    <interactant intactId="EBI-724754">
        <id>O14880</id>
    </interactant>
    <interactant intactId="EBI-2852148">
        <id>Q9H2L4</id>
        <label>TMEM60</label>
    </interactant>
    <organismsDiffer>false</organismsDiffer>
    <experiments>3</experiments>
</comment>
<comment type="interaction">
    <interactant intactId="EBI-724754">
        <id>O14880</id>
    </interactant>
    <interactant intactId="EBI-2548832">
        <id>Q8N661</id>
        <label>TMEM86B</label>
    </interactant>
    <organismsDiffer>false</organismsDiffer>
    <experiments>3</experiments>
</comment>
<comment type="interaction">
    <interactant intactId="EBI-724754">
        <id>O14880</id>
    </interactant>
    <interactant intactId="EBI-6447886">
        <id>Q9Y320</id>
        <label>TMX2</label>
    </interactant>
    <organismsDiffer>false</organismsDiffer>
    <experiments>3</experiments>
</comment>
<comment type="interaction">
    <interactant intactId="EBI-724754">
        <id>O14880</id>
    </interactant>
    <interactant intactId="EBI-2466403">
        <id>O95859</id>
        <label>TSPAN12</label>
    </interactant>
    <organismsDiffer>false</organismsDiffer>
    <experiments>3</experiments>
</comment>
<comment type="interaction">
    <interactant intactId="EBI-724754">
        <id>O14880</id>
    </interactant>
    <interactant intactId="EBI-3914288">
        <id>O60636</id>
        <label>TSPAN2</label>
    </interactant>
    <organismsDiffer>false</organismsDiffer>
    <experiments>3</experiments>
</comment>
<comment type="interaction">
    <interactant intactId="EBI-724754">
        <id>O14880</id>
    </interactant>
    <interactant intactId="EBI-12045841">
        <id>Q86UF1</id>
        <label>TSPAN33</label>
    </interactant>
    <organismsDiffer>false</organismsDiffer>
    <experiments>3</experiments>
</comment>
<comment type="interaction">
    <interactant intactId="EBI-724754">
        <id>O14880</id>
    </interactant>
    <interactant intactId="EBI-10243654">
        <id>Q5BVD1</id>
        <label>TTMP</label>
    </interactant>
    <organismsDiffer>false</organismsDiffer>
    <experiments>3</experiments>
</comment>
<comment type="interaction">
    <interactant intactId="EBI-724754">
        <id>O14880</id>
    </interactant>
    <interactant intactId="EBI-2819725">
        <id>Q9Y5Z9</id>
        <label>UBIAD1</label>
    </interactant>
    <organismsDiffer>false</organismsDiffer>
    <experiments>3</experiments>
</comment>
<comment type="interaction">
    <interactant intactId="EBI-724754">
        <id>O14880</id>
    </interactant>
    <interactant intactId="EBI-7601760">
        <id>Q53HI1</id>
        <label>UNC50</label>
    </interactant>
    <organismsDiffer>false</organismsDiffer>
    <experiments>3</experiments>
</comment>
<comment type="interaction">
    <interactant intactId="EBI-724754">
        <id>O14880</id>
    </interactant>
    <interactant intactId="EBI-722343">
        <id>Q15836</id>
        <label>VAMP3</label>
    </interactant>
    <organismsDiffer>false</organismsDiffer>
    <experiments>3</experiments>
</comment>
<comment type="interaction">
    <interactant intactId="EBI-724754">
        <id>O14880</id>
    </interactant>
    <interactant intactId="EBI-744953">
        <id>O75379</id>
        <label>VAMP4</label>
    </interactant>
    <organismsDiffer>false</organismsDiffer>
    <experiments>3</experiments>
</comment>
<comment type="interaction">
    <interactant intactId="EBI-724754">
        <id>O14880</id>
    </interactant>
    <interactant intactId="EBI-2799703">
        <id>O95070</id>
        <label>YIF1A</label>
    </interactant>
    <organismsDiffer>false</organismsDiffer>
    <experiments>3</experiments>
</comment>
<comment type="interaction">
    <interactant intactId="EBI-724754">
        <id>O14880</id>
    </interactant>
    <interactant intactId="EBI-718439">
        <id>O95159</id>
        <label>ZFPL1</label>
    </interactant>
    <organismsDiffer>false</organismsDiffer>
    <experiments>3</experiments>
</comment>
<comment type="subcellular location">
    <subcellularLocation>
        <location evidence="4">Mitochondrion outer membrane</location>
        <topology evidence="1">Multi-pass membrane protein</topology>
    </subcellularLocation>
</comment>
<comment type="tissue specificity">
    <text evidence="5 6">Predominantly expressed in heart, skeletal muscle, and adrenal cortex. Also found in brain, placenta, liver, kidney, pancreas, thyroid, testis and ovary. Almost absent in lung, thymus and peripheral blood leukocytes. Expressed in mast cells.</text>
</comment>
<comment type="similarity">
    <text evidence="7">Belongs to the MAPEG family.</text>
</comment>
<comment type="caution">
    <text evidence="3 4 6">Initially it was postulated to be an endoplasmic reticulum membrane protein, but later it was proved by combined proteomic analysis, APEX fingerprinting and confocal and electron microscopy to be localized to the mitochondrion instead.</text>
</comment>
<gene>
    <name evidence="11" type="primary">MGST3</name>
</gene>
<keyword id="KW-0443">Lipid metabolism</keyword>
<keyword id="KW-0449">Lipoprotein</keyword>
<keyword id="KW-0456">Lyase</keyword>
<keyword id="KW-0472">Membrane</keyword>
<keyword id="KW-0496">Mitochondrion</keyword>
<keyword id="KW-1000">Mitochondrion outer membrane</keyword>
<keyword id="KW-0560">Oxidoreductase</keyword>
<keyword id="KW-0564">Palmitate</keyword>
<keyword id="KW-1267">Proteomics identification</keyword>
<keyword id="KW-1185">Reference proteome</keyword>
<keyword id="KW-0808">Transferase</keyword>
<keyword id="KW-0812">Transmembrane</keyword>
<keyword id="KW-1133">Transmembrane helix</keyword>
<reference key="1">
    <citation type="journal article" date="1997" name="J. Biol. Chem.">
        <title>Identification and characterization of a novel microsomal enzyme with glutathione-dependent transferase and peroxidase activities.</title>
        <authorList>
            <person name="Jakobsson P.-J."/>
            <person name="Mancini J.A."/>
            <person name="Riendeau D."/>
            <person name="Ford-Hutchinson A.W."/>
        </authorList>
    </citation>
    <scope>NUCLEOTIDE SEQUENCE [MRNA]</scope>
    <scope>CATALYTIC ACTIVITY</scope>
    <scope>TISSUE SPECIFICITY</scope>
    <scope>BIOPHYSICOCHEMICAL PROPERTIES</scope>
    <scope>FUNCTION</scope>
    <scope>PATHWAY</scope>
    <scope>CAUTION</scope>
</reference>
<reference key="2">
    <citation type="submission" date="2004-05" db="EMBL/GenBank/DDBJ databases">
        <title>Cloning of human full open reading frames in Gateway(TM) system entry vector (pDONR201).</title>
        <authorList>
            <person name="Ebert L."/>
            <person name="Schick M."/>
            <person name="Neubert P."/>
            <person name="Schatten R."/>
            <person name="Henze S."/>
            <person name="Korn B."/>
        </authorList>
    </citation>
    <scope>NUCLEOTIDE SEQUENCE [LARGE SCALE MRNA]</scope>
</reference>
<reference key="3">
    <citation type="submission" date="2003-09" db="EMBL/GenBank/DDBJ databases">
        <authorList>
            <consortium name="NIEHS SNPs program"/>
        </authorList>
    </citation>
    <scope>NUCLEOTIDE SEQUENCE [GENOMIC DNA]</scope>
</reference>
<reference key="4">
    <citation type="journal article" date="2004" name="Nat. Genet.">
        <title>Complete sequencing and characterization of 21,243 full-length human cDNAs.</title>
        <authorList>
            <person name="Ota T."/>
            <person name="Suzuki Y."/>
            <person name="Nishikawa T."/>
            <person name="Otsuki T."/>
            <person name="Sugiyama T."/>
            <person name="Irie R."/>
            <person name="Wakamatsu A."/>
            <person name="Hayashi K."/>
            <person name="Sato H."/>
            <person name="Nagai K."/>
            <person name="Kimura K."/>
            <person name="Makita H."/>
            <person name="Sekine M."/>
            <person name="Obayashi M."/>
            <person name="Nishi T."/>
            <person name="Shibahara T."/>
            <person name="Tanaka T."/>
            <person name="Ishii S."/>
            <person name="Yamamoto J."/>
            <person name="Saito K."/>
            <person name="Kawai Y."/>
            <person name="Isono Y."/>
            <person name="Nakamura Y."/>
            <person name="Nagahari K."/>
            <person name="Murakami K."/>
            <person name="Yasuda T."/>
            <person name="Iwayanagi T."/>
            <person name="Wagatsuma M."/>
            <person name="Shiratori A."/>
            <person name="Sudo H."/>
            <person name="Hosoiri T."/>
            <person name="Kaku Y."/>
            <person name="Kodaira H."/>
            <person name="Kondo H."/>
            <person name="Sugawara M."/>
            <person name="Takahashi M."/>
            <person name="Kanda K."/>
            <person name="Yokoi T."/>
            <person name="Furuya T."/>
            <person name="Kikkawa E."/>
            <person name="Omura Y."/>
            <person name="Abe K."/>
            <person name="Kamihara K."/>
            <person name="Katsuta N."/>
            <person name="Sato K."/>
            <person name="Tanikawa M."/>
            <person name="Yamazaki M."/>
            <person name="Ninomiya K."/>
            <person name="Ishibashi T."/>
            <person name="Yamashita H."/>
            <person name="Murakawa K."/>
            <person name="Fujimori K."/>
            <person name="Tanai H."/>
            <person name="Kimata M."/>
            <person name="Watanabe M."/>
            <person name="Hiraoka S."/>
            <person name="Chiba Y."/>
            <person name="Ishida S."/>
            <person name="Ono Y."/>
            <person name="Takiguchi S."/>
            <person name="Watanabe S."/>
            <person name="Yosida M."/>
            <person name="Hotuta T."/>
            <person name="Kusano J."/>
            <person name="Kanehori K."/>
            <person name="Takahashi-Fujii A."/>
            <person name="Hara H."/>
            <person name="Tanase T.-O."/>
            <person name="Nomura Y."/>
            <person name="Togiya S."/>
            <person name="Komai F."/>
            <person name="Hara R."/>
            <person name="Takeuchi K."/>
            <person name="Arita M."/>
            <person name="Imose N."/>
            <person name="Musashino K."/>
            <person name="Yuuki H."/>
            <person name="Oshima A."/>
            <person name="Sasaki N."/>
            <person name="Aotsuka S."/>
            <person name="Yoshikawa Y."/>
            <person name="Matsunawa H."/>
            <person name="Ichihara T."/>
            <person name="Shiohata N."/>
            <person name="Sano S."/>
            <person name="Moriya S."/>
            <person name="Momiyama H."/>
            <person name="Satoh N."/>
            <person name="Takami S."/>
            <person name="Terashima Y."/>
            <person name="Suzuki O."/>
            <person name="Nakagawa S."/>
            <person name="Senoh A."/>
            <person name="Mizoguchi H."/>
            <person name="Goto Y."/>
            <person name="Shimizu F."/>
            <person name="Wakebe H."/>
            <person name="Hishigaki H."/>
            <person name="Watanabe T."/>
            <person name="Sugiyama A."/>
            <person name="Takemoto M."/>
            <person name="Kawakami B."/>
            <person name="Yamazaki M."/>
            <person name="Watanabe K."/>
            <person name="Kumagai A."/>
            <person name="Itakura S."/>
            <person name="Fukuzumi Y."/>
            <person name="Fujimori Y."/>
            <person name="Komiyama M."/>
            <person name="Tashiro H."/>
            <person name="Tanigami A."/>
            <person name="Fujiwara T."/>
            <person name="Ono T."/>
            <person name="Yamada K."/>
            <person name="Fujii Y."/>
            <person name="Ozaki K."/>
            <person name="Hirao M."/>
            <person name="Ohmori Y."/>
            <person name="Kawabata A."/>
            <person name="Hikiji T."/>
            <person name="Kobatake N."/>
            <person name="Inagaki H."/>
            <person name="Ikema Y."/>
            <person name="Okamoto S."/>
            <person name="Okitani R."/>
            <person name="Kawakami T."/>
            <person name="Noguchi S."/>
            <person name="Itoh T."/>
            <person name="Shigeta K."/>
            <person name="Senba T."/>
            <person name="Matsumura K."/>
            <person name="Nakajima Y."/>
            <person name="Mizuno T."/>
            <person name="Morinaga M."/>
            <person name="Sasaki M."/>
            <person name="Togashi T."/>
            <person name="Oyama M."/>
            <person name="Hata H."/>
            <person name="Watanabe M."/>
            <person name="Komatsu T."/>
            <person name="Mizushima-Sugano J."/>
            <person name="Satoh T."/>
            <person name="Shirai Y."/>
            <person name="Takahashi Y."/>
            <person name="Nakagawa K."/>
            <person name="Okumura K."/>
            <person name="Nagase T."/>
            <person name="Nomura N."/>
            <person name="Kikuchi H."/>
            <person name="Masuho Y."/>
            <person name="Yamashita R."/>
            <person name="Nakai K."/>
            <person name="Yada T."/>
            <person name="Nakamura Y."/>
            <person name="Ohara O."/>
            <person name="Isogai T."/>
            <person name="Sugano S."/>
        </authorList>
    </citation>
    <scope>NUCLEOTIDE SEQUENCE [LARGE SCALE MRNA]</scope>
    <source>
        <tissue>Cerebellum</tissue>
    </source>
</reference>
<reference key="5">
    <citation type="journal article" date="2006" name="Nature">
        <title>The DNA sequence and biological annotation of human chromosome 1.</title>
        <authorList>
            <person name="Gregory S.G."/>
            <person name="Barlow K.F."/>
            <person name="McLay K.E."/>
            <person name="Kaul R."/>
            <person name="Swarbreck D."/>
            <person name="Dunham A."/>
            <person name="Scott C.E."/>
            <person name="Howe K.L."/>
            <person name="Woodfine K."/>
            <person name="Spencer C.C.A."/>
            <person name="Jones M.C."/>
            <person name="Gillson C."/>
            <person name="Searle S."/>
            <person name="Zhou Y."/>
            <person name="Kokocinski F."/>
            <person name="McDonald L."/>
            <person name="Evans R."/>
            <person name="Phillips K."/>
            <person name="Atkinson A."/>
            <person name="Cooper R."/>
            <person name="Jones C."/>
            <person name="Hall R.E."/>
            <person name="Andrews T.D."/>
            <person name="Lloyd C."/>
            <person name="Ainscough R."/>
            <person name="Almeida J.P."/>
            <person name="Ambrose K.D."/>
            <person name="Anderson F."/>
            <person name="Andrew R.W."/>
            <person name="Ashwell R.I.S."/>
            <person name="Aubin K."/>
            <person name="Babbage A.K."/>
            <person name="Bagguley C.L."/>
            <person name="Bailey J."/>
            <person name="Beasley H."/>
            <person name="Bethel G."/>
            <person name="Bird C.P."/>
            <person name="Bray-Allen S."/>
            <person name="Brown J.Y."/>
            <person name="Brown A.J."/>
            <person name="Buckley D."/>
            <person name="Burton J."/>
            <person name="Bye J."/>
            <person name="Carder C."/>
            <person name="Chapman J.C."/>
            <person name="Clark S.Y."/>
            <person name="Clarke G."/>
            <person name="Clee C."/>
            <person name="Cobley V."/>
            <person name="Collier R.E."/>
            <person name="Corby N."/>
            <person name="Coville G.J."/>
            <person name="Davies J."/>
            <person name="Deadman R."/>
            <person name="Dunn M."/>
            <person name="Earthrowl M."/>
            <person name="Ellington A.G."/>
            <person name="Errington H."/>
            <person name="Frankish A."/>
            <person name="Frankland J."/>
            <person name="French L."/>
            <person name="Garner P."/>
            <person name="Garnett J."/>
            <person name="Gay L."/>
            <person name="Ghori M.R.J."/>
            <person name="Gibson R."/>
            <person name="Gilby L.M."/>
            <person name="Gillett W."/>
            <person name="Glithero R.J."/>
            <person name="Grafham D.V."/>
            <person name="Griffiths C."/>
            <person name="Griffiths-Jones S."/>
            <person name="Grocock R."/>
            <person name="Hammond S."/>
            <person name="Harrison E.S.I."/>
            <person name="Hart E."/>
            <person name="Haugen E."/>
            <person name="Heath P.D."/>
            <person name="Holmes S."/>
            <person name="Holt K."/>
            <person name="Howden P.J."/>
            <person name="Hunt A.R."/>
            <person name="Hunt S.E."/>
            <person name="Hunter G."/>
            <person name="Isherwood J."/>
            <person name="James R."/>
            <person name="Johnson C."/>
            <person name="Johnson D."/>
            <person name="Joy A."/>
            <person name="Kay M."/>
            <person name="Kershaw J.K."/>
            <person name="Kibukawa M."/>
            <person name="Kimberley A.M."/>
            <person name="King A."/>
            <person name="Knights A.J."/>
            <person name="Lad H."/>
            <person name="Laird G."/>
            <person name="Lawlor S."/>
            <person name="Leongamornlert D.A."/>
            <person name="Lloyd D.M."/>
            <person name="Loveland J."/>
            <person name="Lovell J."/>
            <person name="Lush M.J."/>
            <person name="Lyne R."/>
            <person name="Martin S."/>
            <person name="Mashreghi-Mohammadi M."/>
            <person name="Matthews L."/>
            <person name="Matthews N.S.W."/>
            <person name="McLaren S."/>
            <person name="Milne S."/>
            <person name="Mistry S."/>
            <person name="Moore M.J.F."/>
            <person name="Nickerson T."/>
            <person name="O'Dell C.N."/>
            <person name="Oliver K."/>
            <person name="Palmeiri A."/>
            <person name="Palmer S.A."/>
            <person name="Parker A."/>
            <person name="Patel D."/>
            <person name="Pearce A.V."/>
            <person name="Peck A.I."/>
            <person name="Pelan S."/>
            <person name="Phelps K."/>
            <person name="Phillimore B.J."/>
            <person name="Plumb R."/>
            <person name="Rajan J."/>
            <person name="Raymond C."/>
            <person name="Rouse G."/>
            <person name="Saenphimmachak C."/>
            <person name="Sehra H.K."/>
            <person name="Sheridan E."/>
            <person name="Shownkeen R."/>
            <person name="Sims S."/>
            <person name="Skuce C.D."/>
            <person name="Smith M."/>
            <person name="Steward C."/>
            <person name="Subramanian S."/>
            <person name="Sycamore N."/>
            <person name="Tracey A."/>
            <person name="Tromans A."/>
            <person name="Van Helmond Z."/>
            <person name="Wall M."/>
            <person name="Wallis J.M."/>
            <person name="White S."/>
            <person name="Whitehead S.L."/>
            <person name="Wilkinson J.E."/>
            <person name="Willey D.L."/>
            <person name="Williams H."/>
            <person name="Wilming L."/>
            <person name="Wray P.W."/>
            <person name="Wu Z."/>
            <person name="Coulson A."/>
            <person name="Vaudin M."/>
            <person name="Sulston J.E."/>
            <person name="Durbin R.M."/>
            <person name="Hubbard T."/>
            <person name="Wooster R."/>
            <person name="Dunham I."/>
            <person name="Carter N.P."/>
            <person name="McVean G."/>
            <person name="Ross M.T."/>
            <person name="Harrow J."/>
            <person name="Olson M.V."/>
            <person name="Beck S."/>
            <person name="Rogers J."/>
            <person name="Bentley D.R."/>
        </authorList>
    </citation>
    <scope>NUCLEOTIDE SEQUENCE [LARGE SCALE GENOMIC DNA]</scope>
</reference>
<reference key="6">
    <citation type="submission" date="2005-07" db="EMBL/GenBank/DDBJ databases">
        <authorList>
            <person name="Mural R.J."/>
            <person name="Istrail S."/>
            <person name="Sutton G.G."/>
            <person name="Florea L."/>
            <person name="Halpern A.L."/>
            <person name="Mobarry C.M."/>
            <person name="Lippert R."/>
            <person name="Walenz B."/>
            <person name="Shatkay H."/>
            <person name="Dew I."/>
            <person name="Miller J.R."/>
            <person name="Flanigan M.J."/>
            <person name="Edwards N.J."/>
            <person name="Bolanos R."/>
            <person name="Fasulo D."/>
            <person name="Halldorsson B.V."/>
            <person name="Hannenhalli S."/>
            <person name="Turner R."/>
            <person name="Yooseph S."/>
            <person name="Lu F."/>
            <person name="Nusskern D.R."/>
            <person name="Shue B.C."/>
            <person name="Zheng X.H."/>
            <person name="Zhong F."/>
            <person name="Delcher A.L."/>
            <person name="Huson D.H."/>
            <person name="Kravitz S.A."/>
            <person name="Mouchard L."/>
            <person name="Reinert K."/>
            <person name="Remington K.A."/>
            <person name="Clark A.G."/>
            <person name="Waterman M.S."/>
            <person name="Eichler E.E."/>
            <person name="Adams M.D."/>
            <person name="Hunkapiller M.W."/>
            <person name="Myers E.W."/>
            <person name="Venter J.C."/>
        </authorList>
    </citation>
    <scope>NUCLEOTIDE SEQUENCE [LARGE SCALE GENOMIC DNA]</scope>
</reference>
<reference key="7">
    <citation type="journal article" date="2004" name="Genome Res.">
        <title>The status, quality, and expansion of the NIH full-length cDNA project: the Mammalian Gene Collection (MGC).</title>
        <authorList>
            <consortium name="The MGC Project Team"/>
        </authorList>
    </citation>
    <scope>NUCLEOTIDE SEQUENCE [LARGE SCALE MRNA]</scope>
    <source>
        <tissue>Kidney</tissue>
        <tissue>Lung</tissue>
    </source>
</reference>
<reference key="8">
    <citation type="journal article" date="2011" name="BMC Syst. Biol.">
        <title>Initial characterization of the human central proteome.</title>
        <authorList>
            <person name="Burkard T.R."/>
            <person name="Planyavsky M."/>
            <person name="Kaupe I."/>
            <person name="Breitwieser F.P."/>
            <person name="Buerckstuemmer T."/>
            <person name="Bennett K.L."/>
            <person name="Superti-Furga G."/>
            <person name="Colinge J."/>
        </authorList>
    </citation>
    <scope>IDENTIFICATION BY MASS SPECTROMETRY [LARGE SCALE ANALYSIS]</scope>
</reference>
<reference key="9">
    <citation type="journal article" date="2011" name="J. Lipid Res.">
        <title>Site-specific analysis of protein S-acylation by resin-assisted capture.</title>
        <authorList>
            <person name="Forrester M.T."/>
            <person name="Hess D.T."/>
            <person name="Thompson J.W."/>
            <person name="Hultman R."/>
            <person name="Moseley M.A."/>
            <person name="Stamler J.S."/>
            <person name="Casey P.J."/>
        </authorList>
    </citation>
    <scope>MUTAGENESIS OF CYS-150 AND CYS-151</scope>
    <scope>PALMITOYLATION AT CYS-150 AND CYS-151</scope>
</reference>
<reference key="10">
    <citation type="journal article" date="2014" name="J. Proteomics">
        <title>An enzyme assisted RP-RPLC approach for in-depth analysis of human liver phosphoproteome.</title>
        <authorList>
            <person name="Bian Y."/>
            <person name="Song C."/>
            <person name="Cheng K."/>
            <person name="Dong M."/>
            <person name="Wang F."/>
            <person name="Huang J."/>
            <person name="Sun D."/>
            <person name="Wang L."/>
            <person name="Ye M."/>
            <person name="Zou H."/>
        </authorList>
    </citation>
    <scope>IDENTIFICATION BY MASS SPECTROMETRY [LARGE SCALE ANALYSIS]</scope>
    <source>
        <tissue>Liver</tissue>
    </source>
</reference>
<reference key="11">
    <citation type="journal article" date="2015" name="Proteomics">
        <title>N-terminome analysis of the human mitochondrial proteome.</title>
        <authorList>
            <person name="Vaca Jacome A.S."/>
            <person name="Rabilloud T."/>
            <person name="Schaeffer-Reiss C."/>
            <person name="Rompais M."/>
            <person name="Ayoub D."/>
            <person name="Lane L."/>
            <person name="Bairoch A."/>
            <person name="Van Dorsselaer A."/>
            <person name="Carapito C."/>
        </authorList>
    </citation>
    <scope>IDENTIFICATION BY MASS SPECTROMETRY [LARGE SCALE ANALYSIS]</scope>
    <scope>CAUTION</scope>
</reference>
<reference key="12">
    <citation type="journal article" date="2016" name="Cell Rep.">
        <title>APEX Fingerprinting Reveals the Subcellular Localization of Proteins of Interest.</title>
        <authorList>
            <person name="Lee S.Y."/>
            <person name="Kang M.G."/>
            <person name="Park J.S."/>
            <person name="Lee G."/>
            <person name="Ting A.Y."/>
            <person name="Rhee H.W."/>
        </authorList>
    </citation>
    <scope>SUBCELLULAR LOCATION</scope>
    <scope>TOPOLOGY</scope>
    <scope>CAUTION</scope>
</reference>
<reference key="13">
    <citation type="journal article" date="2022" name="J. Lipid Res.">
        <title>Biosynthesis of prostaglandin 15dPGJ2 -glutathione and 15dPGJ2-cysteine conjugates in macrophages and mast cells via MGST3.</title>
        <authorList>
            <person name="Steinmetz-Spaeh J."/>
            <person name="Liu J."/>
            <person name="Singh R."/>
            <person name="Ekoff M."/>
            <person name="Boddul S."/>
            <person name="Tang X."/>
            <person name="Bergqvist F."/>
            <person name="Idborg H."/>
            <person name="Heitel P."/>
            <person name="Roennberg E."/>
            <person name="Merk D."/>
            <person name="Wermeling F."/>
            <person name="Haeggstroem J.Z."/>
            <person name="Nilsson G."/>
            <person name="Steinhilber D."/>
            <person name="Larsson K."/>
            <person name="Korotkova M."/>
            <person name="Jakobsson P.J."/>
        </authorList>
    </citation>
    <scope>FUNCTION</scope>
    <scope>CATALYTIC ACTIVITY</scope>
    <scope>BIOPHYSICOCHEMICAL PROPERTIES</scope>
    <scope>TISSUE SPECIFICITY</scope>
</reference>
<feature type="chain" id="PRO_0000217741" description="Glutathione S-transferase 3, mitochondrial">
    <location>
        <begin position="1"/>
        <end position="152"/>
    </location>
</feature>
<feature type="topological domain" description="Mitochondrial intermembrane" evidence="8">
    <location>
        <begin position="1"/>
        <end position="8"/>
    </location>
</feature>
<feature type="transmembrane region" description="Helical" evidence="1">
    <location>
        <begin position="9"/>
        <end position="29"/>
    </location>
</feature>
<feature type="topological domain" description="Cytoplasmic" evidence="7">
    <location>
        <begin position="30"/>
        <end position="70"/>
    </location>
</feature>
<feature type="transmembrane region" description="Helical" evidence="1">
    <location>
        <begin position="71"/>
        <end position="91"/>
    </location>
</feature>
<feature type="topological domain" description="Mitochondrial intermembrane" evidence="7">
    <location>
        <begin position="92"/>
        <end position="119"/>
    </location>
</feature>
<feature type="transmembrane region" description="Helical" evidence="1">
    <location>
        <begin position="120"/>
        <end position="140"/>
    </location>
</feature>
<feature type="topological domain" description="Cytoplasmic" evidence="8">
    <location>
        <begin position="141"/>
        <end position="152"/>
    </location>
</feature>
<feature type="lipid moiety-binding region" description="S-palmitoyl cysteine" evidence="2">
    <location>
        <position position="150"/>
    </location>
</feature>
<feature type="lipid moiety-binding region" description="S-palmitoyl cysteine" evidence="2">
    <location>
        <position position="151"/>
    </location>
</feature>
<feature type="sequence variant" id="VAR_012061" description="In dbSNP:rs1802087.">
    <original>G</original>
    <variation>C</variation>
    <location>
        <position position="15"/>
    </location>
</feature>
<feature type="sequence variant" id="VAR_012062" description="In dbSNP:rs1802088.">
    <original>P</original>
    <variation>S</variation>
    <location>
        <position position="48"/>
    </location>
</feature>
<feature type="mutagenesis site" description="Abolishes S-acylation; when associated with S-151." evidence="2">
    <original>C</original>
    <variation>S</variation>
    <location>
        <position position="150"/>
    </location>
</feature>
<feature type="mutagenesis site" description="Abolishes S-acylation; when associated with S-150." evidence="2">
    <original>C</original>
    <variation>S</variation>
    <location>
        <position position="151"/>
    </location>
</feature>
<accession>O14880</accession>
<accession>B2R592</accession>
<accession>Q6ICN4</accession>
<dbReference type="EC" id="2.5.1.-" evidence="5"/>
<dbReference type="EC" id="1.11.1.-" evidence="6"/>
<dbReference type="EC" id="4.4.1.20" evidence="6"/>
<dbReference type="EMBL" id="AF026977">
    <property type="protein sequence ID" value="AAB82609.1"/>
    <property type="molecule type" value="mRNA"/>
</dbReference>
<dbReference type="EMBL" id="CR450359">
    <property type="protein sequence ID" value="CAG29355.1"/>
    <property type="molecule type" value="mRNA"/>
</dbReference>
<dbReference type="EMBL" id="AY388493">
    <property type="protein sequence ID" value="AAQ81301.1"/>
    <property type="molecule type" value="Genomic_DNA"/>
</dbReference>
<dbReference type="EMBL" id="AK312103">
    <property type="protein sequence ID" value="BAG35039.1"/>
    <property type="molecule type" value="mRNA"/>
</dbReference>
<dbReference type="EMBL" id="AL451074">
    <property type="status" value="NOT_ANNOTATED_CDS"/>
    <property type="molecule type" value="Genomic_DNA"/>
</dbReference>
<dbReference type="EMBL" id="CH471067">
    <property type="protein sequence ID" value="EAW90752.1"/>
    <property type="molecule type" value="Genomic_DNA"/>
</dbReference>
<dbReference type="EMBL" id="BC000505">
    <property type="protein sequence ID" value="AAH00505.1"/>
    <property type="molecule type" value="mRNA"/>
</dbReference>
<dbReference type="EMBL" id="BC003034">
    <property type="protein sequence ID" value="AAH03034.1"/>
    <property type="molecule type" value="mRNA"/>
</dbReference>
<dbReference type="EMBL" id="BC005964">
    <property type="protein sequence ID" value="AAH05964.1"/>
    <property type="molecule type" value="mRNA"/>
</dbReference>
<dbReference type="CCDS" id="CCDS1249.1"/>
<dbReference type="RefSeq" id="NP_004519.1">
    <property type="nucleotide sequence ID" value="NM_004528.4"/>
</dbReference>
<dbReference type="RefSeq" id="XP_005245231.2">
    <property type="nucleotide sequence ID" value="XM_005245174.3"/>
</dbReference>
<dbReference type="SMR" id="O14880"/>
<dbReference type="BioGRID" id="110415">
    <property type="interactions" value="291"/>
</dbReference>
<dbReference type="FunCoup" id="O14880">
    <property type="interactions" value="975"/>
</dbReference>
<dbReference type="IntAct" id="O14880">
    <property type="interactions" value="430"/>
</dbReference>
<dbReference type="MINT" id="O14880"/>
<dbReference type="STRING" id="9606.ENSP00000356864"/>
<dbReference type="ChEMBL" id="CHEMBL1743186"/>
<dbReference type="DrugBank" id="DB00143">
    <property type="generic name" value="Glutathione"/>
</dbReference>
<dbReference type="DrugBank" id="DB14924">
    <property type="generic name" value="Ritlecitinib"/>
</dbReference>
<dbReference type="SwissLipids" id="SLP:000001463"/>
<dbReference type="CarbonylDB" id="O14880"/>
<dbReference type="GlyGen" id="O14880">
    <property type="glycosylation" value="1 site, 1 O-linked glycan (1 site)"/>
</dbReference>
<dbReference type="iPTMnet" id="O14880"/>
<dbReference type="PhosphoSitePlus" id="O14880"/>
<dbReference type="SwissPalm" id="O14880"/>
<dbReference type="BioMuta" id="MGST3"/>
<dbReference type="jPOST" id="O14880"/>
<dbReference type="MassIVE" id="O14880"/>
<dbReference type="PaxDb" id="9606-ENSP00000356864"/>
<dbReference type="PeptideAtlas" id="O14880"/>
<dbReference type="ProteomicsDB" id="48280"/>
<dbReference type="Pumba" id="O14880"/>
<dbReference type="TopDownProteomics" id="O14880"/>
<dbReference type="Antibodypedia" id="34331">
    <property type="antibodies" value="125 antibodies from 21 providers"/>
</dbReference>
<dbReference type="DNASU" id="4259"/>
<dbReference type="Ensembl" id="ENST00000367884.6">
    <property type="protein sequence ID" value="ENSP00000356859.1"/>
    <property type="gene ID" value="ENSG00000143198.13"/>
</dbReference>
<dbReference type="Ensembl" id="ENST00000367889.8">
    <property type="protein sequence ID" value="ENSP00000356864.3"/>
    <property type="gene ID" value="ENSG00000143198.13"/>
</dbReference>
<dbReference type="GeneID" id="4259"/>
<dbReference type="KEGG" id="hsa:4259"/>
<dbReference type="MANE-Select" id="ENST00000367889.8">
    <property type="protein sequence ID" value="ENSP00000356864.3"/>
    <property type="RefSeq nucleotide sequence ID" value="NM_004528.4"/>
    <property type="RefSeq protein sequence ID" value="NP_004519.1"/>
</dbReference>
<dbReference type="UCSC" id="uc001gdf.4">
    <property type="organism name" value="human"/>
</dbReference>
<dbReference type="AGR" id="HGNC:7064"/>
<dbReference type="CTD" id="4259"/>
<dbReference type="DisGeNET" id="4259"/>
<dbReference type="GeneCards" id="MGST3"/>
<dbReference type="HGNC" id="HGNC:7064">
    <property type="gene designation" value="MGST3"/>
</dbReference>
<dbReference type="HPA" id="ENSG00000143198">
    <property type="expression patterns" value="Low tissue specificity"/>
</dbReference>
<dbReference type="MIM" id="604564">
    <property type="type" value="gene"/>
</dbReference>
<dbReference type="neXtProt" id="NX_O14880"/>
<dbReference type="OpenTargets" id="ENSG00000143198"/>
<dbReference type="PharmGKB" id="PA30793"/>
<dbReference type="VEuPathDB" id="HostDB:ENSG00000143198"/>
<dbReference type="eggNOG" id="ENOG502S4E5">
    <property type="taxonomic scope" value="Eukaryota"/>
</dbReference>
<dbReference type="GeneTree" id="ENSGT00390000008608"/>
<dbReference type="HOGENOM" id="CLU_110291_1_0_1"/>
<dbReference type="InParanoid" id="O14880"/>
<dbReference type="OrthoDB" id="410651at2759"/>
<dbReference type="PAN-GO" id="O14880">
    <property type="GO annotations" value="3 GO annotations based on evolutionary models"/>
</dbReference>
<dbReference type="PhylomeDB" id="O14880"/>
<dbReference type="TreeFam" id="TF105328"/>
<dbReference type="PathwayCommons" id="O14880"/>
<dbReference type="Reactome" id="R-HSA-156590">
    <property type="pathway name" value="Glutathione conjugation"/>
</dbReference>
<dbReference type="Reactome" id="R-HSA-5423646">
    <property type="pathway name" value="Aflatoxin activation and detoxification"/>
</dbReference>
<dbReference type="SignaLink" id="O14880"/>
<dbReference type="UniPathway" id="UPA00383"/>
<dbReference type="UniPathway" id="UPA00879"/>
<dbReference type="BioGRID-ORCS" id="4259">
    <property type="hits" value="12 hits in 1168 CRISPR screens"/>
</dbReference>
<dbReference type="ChiTaRS" id="MGST3">
    <property type="organism name" value="human"/>
</dbReference>
<dbReference type="GeneWiki" id="MGST3"/>
<dbReference type="GenomeRNAi" id="4259"/>
<dbReference type="Pharos" id="O14880">
    <property type="development level" value="Tbio"/>
</dbReference>
<dbReference type="PRO" id="PR:O14880"/>
<dbReference type="Proteomes" id="UP000005640">
    <property type="component" value="Chromosome 1"/>
</dbReference>
<dbReference type="RNAct" id="O14880">
    <property type="molecule type" value="protein"/>
</dbReference>
<dbReference type="Bgee" id="ENSG00000143198">
    <property type="expression patterns" value="Expressed in corpus epididymis and 206 other cell types or tissues"/>
</dbReference>
<dbReference type="ExpressionAtlas" id="O14880">
    <property type="expression patterns" value="baseline and differential"/>
</dbReference>
<dbReference type="GO" id="GO:0005783">
    <property type="term" value="C:endoplasmic reticulum"/>
    <property type="evidence" value="ECO:0000318"/>
    <property type="project" value="GO_Central"/>
</dbReference>
<dbReference type="GO" id="GO:0005789">
    <property type="term" value="C:endoplasmic reticulum membrane"/>
    <property type="evidence" value="ECO:0000304"/>
    <property type="project" value="Reactome"/>
</dbReference>
<dbReference type="GO" id="GO:0043231">
    <property type="term" value="C:intracellular membrane-bounded organelle"/>
    <property type="evidence" value="ECO:0000314"/>
    <property type="project" value="BHF-UCL"/>
</dbReference>
<dbReference type="GO" id="GO:0016020">
    <property type="term" value="C:membrane"/>
    <property type="evidence" value="ECO:0000314"/>
    <property type="project" value="BHF-UCL"/>
</dbReference>
<dbReference type="GO" id="GO:0005741">
    <property type="term" value="C:mitochondrial outer membrane"/>
    <property type="evidence" value="ECO:0000314"/>
    <property type="project" value="UniProtKB"/>
</dbReference>
<dbReference type="GO" id="GO:0005739">
    <property type="term" value="C:mitochondrion"/>
    <property type="evidence" value="ECO:0006056"/>
    <property type="project" value="FlyBase"/>
</dbReference>
<dbReference type="GO" id="GO:0005635">
    <property type="term" value="C:nuclear envelope"/>
    <property type="evidence" value="ECO:0000318"/>
    <property type="project" value="GO_Central"/>
</dbReference>
<dbReference type="GO" id="GO:0004602">
    <property type="term" value="F:glutathione peroxidase activity"/>
    <property type="evidence" value="ECO:0000314"/>
    <property type="project" value="BHF-UCL"/>
</dbReference>
<dbReference type="GO" id="GO:0004364">
    <property type="term" value="F:glutathione transferase activity"/>
    <property type="evidence" value="ECO:0000314"/>
    <property type="project" value="UniProtKB"/>
</dbReference>
<dbReference type="GO" id="GO:0042802">
    <property type="term" value="F:identical protein binding"/>
    <property type="evidence" value="ECO:0000353"/>
    <property type="project" value="IntAct"/>
</dbReference>
<dbReference type="GO" id="GO:0004464">
    <property type="term" value="F:leukotriene-C4 synthase activity"/>
    <property type="evidence" value="ECO:0000314"/>
    <property type="project" value="BHF-UCL"/>
</dbReference>
<dbReference type="GO" id="GO:0019369">
    <property type="term" value="P:arachidonate metabolic process"/>
    <property type="evidence" value="ECO:0007669"/>
    <property type="project" value="UniProtKB-UniPathway"/>
</dbReference>
<dbReference type="GO" id="GO:0019370">
    <property type="term" value="P:leukotriene biosynthetic process"/>
    <property type="evidence" value="ECO:0000314"/>
    <property type="project" value="BHF-UCL"/>
</dbReference>
<dbReference type="GO" id="GO:0006629">
    <property type="term" value="P:lipid metabolic process"/>
    <property type="evidence" value="ECO:0000314"/>
    <property type="project" value="BHF-UCL"/>
</dbReference>
<dbReference type="GO" id="GO:0006692">
    <property type="term" value="P:prostanoid metabolic process"/>
    <property type="evidence" value="ECO:0000314"/>
    <property type="project" value="UniProtKB"/>
</dbReference>
<dbReference type="FunFam" id="1.20.120.550:FF:000004">
    <property type="entry name" value="Microsomal glutathione S-transferase 3"/>
    <property type="match status" value="1"/>
</dbReference>
<dbReference type="Gene3D" id="1.20.120.550">
    <property type="entry name" value="Membrane associated eicosanoid/glutathione metabolism-like domain"/>
    <property type="match status" value="1"/>
</dbReference>
<dbReference type="InterPro" id="IPR050997">
    <property type="entry name" value="MAPEG"/>
</dbReference>
<dbReference type="InterPro" id="IPR023352">
    <property type="entry name" value="MAPEG-like_dom_sf"/>
</dbReference>
<dbReference type="InterPro" id="IPR001129">
    <property type="entry name" value="Membr-assoc_MAPEG"/>
</dbReference>
<dbReference type="PANTHER" id="PTHR10250:SF26">
    <property type="entry name" value="GLUTATHIONE S-TRANSFERASE 3, MITOCHONDRIAL"/>
    <property type="match status" value="1"/>
</dbReference>
<dbReference type="PANTHER" id="PTHR10250">
    <property type="entry name" value="MICROSOMAL GLUTATHIONE S-TRANSFERASE"/>
    <property type="match status" value="1"/>
</dbReference>
<dbReference type="Pfam" id="PF01124">
    <property type="entry name" value="MAPEG"/>
    <property type="match status" value="1"/>
</dbReference>
<dbReference type="SUPFAM" id="SSF161084">
    <property type="entry name" value="MAPEG domain-like"/>
    <property type="match status" value="1"/>
</dbReference>